<name>FOLC_DICDI</name>
<comment type="function">
    <text evidence="1">Conversion of folates to polyglutamate derivatives.</text>
</comment>
<comment type="catalytic activity">
    <reaction>
        <text>(6S)-5,6,7,8-tetrahydrofolyl-(gamma-L-Glu)(n) + L-glutamate + ATP = (6S)-5,6,7,8-tetrahydrofolyl-(gamma-L-Glu)(n+1) + ADP + phosphate + H(+)</text>
        <dbReference type="Rhea" id="RHEA:10580"/>
        <dbReference type="Rhea" id="RHEA-COMP:14738"/>
        <dbReference type="Rhea" id="RHEA-COMP:14740"/>
        <dbReference type="ChEBI" id="CHEBI:15378"/>
        <dbReference type="ChEBI" id="CHEBI:29985"/>
        <dbReference type="ChEBI" id="CHEBI:30616"/>
        <dbReference type="ChEBI" id="CHEBI:43474"/>
        <dbReference type="ChEBI" id="CHEBI:141005"/>
        <dbReference type="ChEBI" id="CHEBI:456216"/>
        <dbReference type="EC" id="6.3.2.17"/>
    </reaction>
</comment>
<comment type="pathway">
    <text>Cofactor biosynthesis; tetrahydrofolylpolyglutamate biosynthesis.</text>
</comment>
<comment type="similarity">
    <text evidence="3">Belongs to the folylpolyglutamate synthase family.</text>
</comment>
<sequence>MNKILLKRQILYNLPKYFKNNIPYTITINKSNQFINNNCKNNNNNFRKLNFTTTTTTTTTAPITNNKPKSNMLYSPKDRSYEEAVNALLTLQSNQTVIISWTKERRDNKEESAKFLMEEMRNYCKTLSIDLERESIIHVAGTKGKGSTCAITESIIREQGFSTGLFTSPHLISPRERIRINGEMISKEMFSQYFWNCWDLLIKDYQTQLPNFFRYLTLMALKIFQDEAIQCTILEVGIGGRMDSTNVFPKPMVTGISALGYDHQNLLGNTLAEIALEKAGIMKVGIPIFTVSSQLPEAINVLIDHSNKVKSPLSIVPSIDQYTISSGGGNNNNNKIESIGLKGTHQLENASLAIALANCWFKKQTFKDVNEIFNSENHKQYNYETNNYNVTQFTPLLKSIELGLKNCEWAGRAQHFTNPSHFPNMDFYLDGAHTVESSIVMLNWWKSIVNTTTTTTTTTTTTTTNNNDDDTIHILIFNSTGGRNPTSFLTPIIQSIDNKEIPIFNKSIIPNIIIEKPIDKKYYINEIIQSNQSSTATTTPIPDNAAVKQTTEIKESSTWEDFVVECYDKLSKKSHPCITADSIESSIEIAKELSENGTKNVKVLITGSLYLVGGVLKVLLKEKSFN</sequence>
<keyword id="KW-0067">ATP-binding</keyword>
<keyword id="KW-0436">Ligase</keyword>
<keyword id="KW-0460">Magnesium</keyword>
<keyword id="KW-0479">Metal-binding</keyword>
<keyword id="KW-0547">Nucleotide-binding</keyword>
<keyword id="KW-0554">One-carbon metabolism</keyword>
<keyword id="KW-1185">Reference proteome</keyword>
<evidence type="ECO:0000250" key="1"/>
<evidence type="ECO:0000250" key="2">
    <source>
        <dbReference type="UniProtKB" id="P08192"/>
    </source>
</evidence>
<evidence type="ECO:0000305" key="3"/>
<reference key="1">
    <citation type="journal article" date="2005" name="Nature">
        <title>The genome of the social amoeba Dictyostelium discoideum.</title>
        <authorList>
            <person name="Eichinger L."/>
            <person name="Pachebat J.A."/>
            <person name="Gloeckner G."/>
            <person name="Rajandream M.A."/>
            <person name="Sucgang R."/>
            <person name="Berriman M."/>
            <person name="Song J."/>
            <person name="Olsen R."/>
            <person name="Szafranski K."/>
            <person name="Xu Q."/>
            <person name="Tunggal B."/>
            <person name="Kummerfeld S."/>
            <person name="Madera M."/>
            <person name="Konfortov B.A."/>
            <person name="Rivero F."/>
            <person name="Bankier A.T."/>
            <person name="Lehmann R."/>
            <person name="Hamlin N."/>
            <person name="Davies R."/>
            <person name="Gaudet P."/>
            <person name="Fey P."/>
            <person name="Pilcher K."/>
            <person name="Chen G."/>
            <person name="Saunders D."/>
            <person name="Sodergren E.J."/>
            <person name="Davis P."/>
            <person name="Kerhornou A."/>
            <person name="Nie X."/>
            <person name="Hall N."/>
            <person name="Anjard C."/>
            <person name="Hemphill L."/>
            <person name="Bason N."/>
            <person name="Farbrother P."/>
            <person name="Desany B."/>
            <person name="Just E."/>
            <person name="Morio T."/>
            <person name="Rost R."/>
            <person name="Churcher C.M."/>
            <person name="Cooper J."/>
            <person name="Haydock S."/>
            <person name="van Driessche N."/>
            <person name="Cronin A."/>
            <person name="Goodhead I."/>
            <person name="Muzny D.M."/>
            <person name="Mourier T."/>
            <person name="Pain A."/>
            <person name="Lu M."/>
            <person name="Harper D."/>
            <person name="Lindsay R."/>
            <person name="Hauser H."/>
            <person name="James K.D."/>
            <person name="Quiles M."/>
            <person name="Madan Babu M."/>
            <person name="Saito T."/>
            <person name="Buchrieser C."/>
            <person name="Wardroper A."/>
            <person name="Felder M."/>
            <person name="Thangavelu M."/>
            <person name="Johnson D."/>
            <person name="Knights A."/>
            <person name="Loulseged H."/>
            <person name="Mungall K.L."/>
            <person name="Oliver K."/>
            <person name="Price C."/>
            <person name="Quail M.A."/>
            <person name="Urushihara H."/>
            <person name="Hernandez J."/>
            <person name="Rabbinowitsch E."/>
            <person name="Steffen D."/>
            <person name="Sanders M."/>
            <person name="Ma J."/>
            <person name="Kohara Y."/>
            <person name="Sharp S."/>
            <person name="Simmonds M.N."/>
            <person name="Spiegler S."/>
            <person name="Tivey A."/>
            <person name="Sugano S."/>
            <person name="White B."/>
            <person name="Walker D."/>
            <person name="Woodward J.R."/>
            <person name="Winckler T."/>
            <person name="Tanaka Y."/>
            <person name="Shaulsky G."/>
            <person name="Schleicher M."/>
            <person name="Weinstock G.M."/>
            <person name="Rosenthal A."/>
            <person name="Cox E.C."/>
            <person name="Chisholm R.L."/>
            <person name="Gibbs R.A."/>
            <person name="Loomis W.F."/>
            <person name="Platzer M."/>
            <person name="Kay R.R."/>
            <person name="Williams J.G."/>
            <person name="Dear P.H."/>
            <person name="Noegel A.A."/>
            <person name="Barrell B.G."/>
            <person name="Kuspa A."/>
        </authorList>
    </citation>
    <scope>NUCLEOTIDE SEQUENCE [LARGE SCALE GENOMIC DNA]</scope>
    <source>
        <strain>AX4</strain>
    </source>
</reference>
<proteinExistence type="inferred from homology"/>
<gene>
    <name type="primary">folC</name>
    <name type="ORF">DDB_G0292632</name>
</gene>
<feature type="chain" id="PRO_0000339187" description="Putative folylpolyglutamate synthase">
    <location>
        <begin position="1"/>
        <end position="626"/>
    </location>
</feature>
<feature type="binding site" evidence="2">
    <location>
        <begin position="144"/>
        <end position="147"/>
    </location>
    <ligand>
        <name>ATP</name>
        <dbReference type="ChEBI" id="CHEBI:30616"/>
    </ligand>
</feature>
<feature type="binding site" evidence="2">
    <location>
        <position position="168"/>
    </location>
    <ligand>
        <name>Mg(2+)</name>
        <dbReference type="ChEBI" id="CHEBI:18420"/>
        <label>1</label>
    </ligand>
</feature>
<feature type="binding site" evidence="2">
    <location>
        <position position="235"/>
    </location>
    <ligand>
        <name>Mg(2+)</name>
        <dbReference type="ChEBI" id="CHEBI:18420"/>
        <label>1</label>
    </ligand>
</feature>
<feature type="binding site" evidence="2">
    <location>
        <position position="263"/>
    </location>
    <ligand>
        <name>Mg(2+)</name>
        <dbReference type="ChEBI" id="CHEBI:18420"/>
        <label>2</label>
    </ligand>
</feature>
<feature type="binding site" evidence="2">
    <location>
        <position position="412"/>
    </location>
    <ligand>
        <name>ATP</name>
        <dbReference type="ChEBI" id="CHEBI:30616"/>
    </ligand>
</feature>
<feature type="binding site" evidence="2">
    <location>
        <position position="430"/>
    </location>
    <ligand>
        <name>ATP</name>
        <dbReference type="ChEBI" id="CHEBI:30616"/>
    </ligand>
</feature>
<accession>Q54CY5</accession>
<dbReference type="EC" id="6.3.2.17"/>
<dbReference type="EMBL" id="AAFI02000194">
    <property type="protein sequence ID" value="EAL61119.1"/>
    <property type="molecule type" value="Genomic_DNA"/>
</dbReference>
<dbReference type="RefSeq" id="XP_629535.1">
    <property type="nucleotide sequence ID" value="XM_629533.1"/>
</dbReference>
<dbReference type="SMR" id="Q54CY5"/>
<dbReference type="FunCoup" id="Q54CY5">
    <property type="interactions" value="491"/>
</dbReference>
<dbReference type="STRING" id="44689.Q54CY5"/>
<dbReference type="PaxDb" id="44689-DDB0230134"/>
<dbReference type="EnsemblProtists" id="EAL61119">
    <property type="protein sequence ID" value="EAL61119"/>
    <property type="gene ID" value="DDB_G0292632"/>
</dbReference>
<dbReference type="GeneID" id="8628793"/>
<dbReference type="KEGG" id="ddi:DDB_G0292632"/>
<dbReference type="dictyBase" id="DDB_G0292632">
    <property type="gene designation" value="folC"/>
</dbReference>
<dbReference type="VEuPathDB" id="AmoebaDB:DDB_G0292632"/>
<dbReference type="eggNOG" id="KOG2525">
    <property type="taxonomic scope" value="Eukaryota"/>
</dbReference>
<dbReference type="HOGENOM" id="CLU_015869_0_2_1"/>
<dbReference type="InParanoid" id="Q54CY5"/>
<dbReference type="OMA" id="LMSYHVF"/>
<dbReference type="PhylomeDB" id="Q54CY5"/>
<dbReference type="Reactome" id="R-DDI-196757">
    <property type="pathway name" value="Metabolism of folate and pterines"/>
</dbReference>
<dbReference type="UniPathway" id="UPA00850"/>
<dbReference type="PRO" id="PR:Q54CY5"/>
<dbReference type="Proteomes" id="UP000002195">
    <property type="component" value="Chromosome 6"/>
</dbReference>
<dbReference type="GO" id="GO:0005737">
    <property type="term" value="C:cytoplasm"/>
    <property type="evidence" value="ECO:0000318"/>
    <property type="project" value="GO_Central"/>
</dbReference>
<dbReference type="GO" id="GO:0005829">
    <property type="term" value="C:cytosol"/>
    <property type="evidence" value="ECO:0000318"/>
    <property type="project" value="GO_Central"/>
</dbReference>
<dbReference type="GO" id="GO:0005739">
    <property type="term" value="C:mitochondrion"/>
    <property type="evidence" value="ECO:0000318"/>
    <property type="project" value="GO_Central"/>
</dbReference>
<dbReference type="GO" id="GO:0005524">
    <property type="term" value="F:ATP binding"/>
    <property type="evidence" value="ECO:0007669"/>
    <property type="project" value="UniProtKB-KW"/>
</dbReference>
<dbReference type="GO" id="GO:0046872">
    <property type="term" value="F:metal ion binding"/>
    <property type="evidence" value="ECO:0007669"/>
    <property type="project" value="UniProtKB-KW"/>
</dbReference>
<dbReference type="GO" id="GO:0004326">
    <property type="term" value="F:tetrahydrofolylpolyglutamate synthase activity"/>
    <property type="evidence" value="ECO:0000318"/>
    <property type="project" value="GO_Central"/>
</dbReference>
<dbReference type="GO" id="GO:0006730">
    <property type="term" value="P:one-carbon metabolic process"/>
    <property type="evidence" value="ECO:0007669"/>
    <property type="project" value="UniProtKB-KW"/>
</dbReference>
<dbReference type="GO" id="GO:0046901">
    <property type="term" value="P:tetrahydrofolylpolyglutamate biosynthetic process"/>
    <property type="evidence" value="ECO:0000318"/>
    <property type="project" value="GO_Central"/>
</dbReference>
<dbReference type="FunFam" id="3.40.1190.10:FF:000008">
    <property type="entry name" value="Folylpolyglutamate synthase"/>
    <property type="match status" value="1"/>
</dbReference>
<dbReference type="Gene3D" id="3.90.190.20">
    <property type="entry name" value="Mur ligase, C-terminal domain"/>
    <property type="match status" value="1"/>
</dbReference>
<dbReference type="Gene3D" id="3.40.1190.10">
    <property type="entry name" value="Mur-like, catalytic domain"/>
    <property type="match status" value="1"/>
</dbReference>
<dbReference type="InterPro" id="IPR001645">
    <property type="entry name" value="Folylpolyglutamate_synth"/>
</dbReference>
<dbReference type="InterPro" id="IPR018109">
    <property type="entry name" value="Folylpolyglutamate_synth_CS"/>
</dbReference>
<dbReference type="InterPro" id="IPR036565">
    <property type="entry name" value="Mur-like_cat_sf"/>
</dbReference>
<dbReference type="InterPro" id="IPR036615">
    <property type="entry name" value="Mur_ligase_C_dom_sf"/>
</dbReference>
<dbReference type="NCBIfam" id="TIGR01499">
    <property type="entry name" value="folC"/>
    <property type="match status" value="1"/>
</dbReference>
<dbReference type="PANTHER" id="PTHR11136:SF5">
    <property type="entry name" value="FOLYLPOLYGLUTAMATE SYNTHASE, MITOCHONDRIAL"/>
    <property type="match status" value="1"/>
</dbReference>
<dbReference type="PANTHER" id="PTHR11136">
    <property type="entry name" value="FOLYLPOLYGLUTAMATE SYNTHASE-RELATED"/>
    <property type="match status" value="1"/>
</dbReference>
<dbReference type="SUPFAM" id="SSF53623">
    <property type="entry name" value="MurD-like peptide ligases, catalytic domain"/>
    <property type="match status" value="1"/>
</dbReference>
<dbReference type="SUPFAM" id="SSF53244">
    <property type="entry name" value="MurD-like peptide ligases, peptide-binding domain"/>
    <property type="match status" value="1"/>
</dbReference>
<dbReference type="PROSITE" id="PS01011">
    <property type="entry name" value="FOLYLPOLYGLU_SYNT_1"/>
    <property type="match status" value="1"/>
</dbReference>
<protein>
    <recommendedName>
        <fullName>Putative folylpolyglutamate synthase</fullName>
        <ecNumber>6.3.2.17</ecNumber>
    </recommendedName>
    <alternativeName>
        <fullName>Folylpoly-gamma-glutamate synthetase</fullName>
        <shortName>FPGS</shortName>
    </alternativeName>
    <alternativeName>
        <fullName>Tetrahydrofolate synthase</fullName>
    </alternativeName>
    <alternativeName>
        <fullName>Tetrahydrofolylpolyglutamate synthase</fullName>
    </alternativeName>
</protein>
<organism>
    <name type="scientific">Dictyostelium discoideum</name>
    <name type="common">Social amoeba</name>
    <dbReference type="NCBI Taxonomy" id="44689"/>
    <lineage>
        <taxon>Eukaryota</taxon>
        <taxon>Amoebozoa</taxon>
        <taxon>Evosea</taxon>
        <taxon>Eumycetozoa</taxon>
        <taxon>Dictyostelia</taxon>
        <taxon>Dictyosteliales</taxon>
        <taxon>Dictyosteliaceae</taxon>
        <taxon>Dictyostelium</taxon>
    </lineage>
</organism>